<name>UPF3_YEAST</name>
<evidence type="ECO:0000255" key="1"/>
<evidence type="ECO:0000256" key="2">
    <source>
        <dbReference type="SAM" id="MobiDB-lite"/>
    </source>
</evidence>
<evidence type="ECO:0000269" key="3">
    <source>
    </source>
</evidence>
<evidence type="ECO:0000269" key="4">
    <source>
    </source>
</evidence>
<evidence type="ECO:0000305" key="5"/>
<sequence>MSNVAGELKNSEGKKKGRGNRYHNKNRGKSKNETVDPKKNENKVNNATNATHNNSKGRRNNKKRNREYYNYKRKARLGKSTENEGFKLVIRLLPPNLTADEFFAILRDNNNDDGDKQDIQGKLKYSDWCFFEGHYSSKVFKNSTYSRCNFLFDNLSDLEKCANFIKTCKFIDNKDNITIPDMKLSPYVKKFTQTSKKDAALVGTIEEDEIFKTFMNSMKQLNENDEYSFQDFSVLKSLEKEFSKSIELENKIAERTERVLTELVGTGDKVKNKNKKKKNKNAKKKFKEEEASAKIPKKKRNRGKKKRENREKSTISKTKNSNVVIIEEAGKEVLKQRKKKMLLQEKLKISNSSQPQSSSAQTQPSFQPKENLFVPRVKILHRDDTKK</sequence>
<keyword id="KW-0866">Nonsense-mediated mRNA decay</keyword>
<keyword id="KW-0539">Nucleus</keyword>
<keyword id="KW-1185">Reference proteome</keyword>
<reference key="1">
    <citation type="journal article" date="1995" name="Proc. Natl. Acad. Sci. U.S.A.">
        <title>Identification of an additional gene required for eukaryotic nonsense mRNA turnover.</title>
        <authorList>
            <person name="Lee B.-S."/>
            <person name="Culbertson M.R."/>
        </authorList>
    </citation>
    <scope>NUCLEOTIDE SEQUENCE [GENOMIC DNA]</scope>
</reference>
<reference key="2">
    <citation type="journal article" date="1997" name="Nature">
        <title>The nucleotide sequence of Saccharomyces cerevisiae chromosome VII.</title>
        <authorList>
            <person name="Tettelin H."/>
            <person name="Agostoni-Carbone M.L."/>
            <person name="Albermann K."/>
            <person name="Albers M."/>
            <person name="Arroyo J."/>
            <person name="Backes U."/>
            <person name="Barreiros T."/>
            <person name="Bertani I."/>
            <person name="Bjourson A.J."/>
            <person name="Brueckner M."/>
            <person name="Bruschi C.V."/>
            <person name="Carignani G."/>
            <person name="Castagnoli L."/>
            <person name="Cerdan E."/>
            <person name="Clemente M.L."/>
            <person name="Coblenz A."/>
            <person name="Coglievina M."/>
            <person name="Coissac E."/>
            <person name="Defoor E."/>
            <person name="Del Bino S."/>
            <person name="Delius H."/>
            <person name="Delneri D."/>
            <person name="de Wergifosse P."/>
            <person name="Dujon B."/>
            <person name="Durand P."/>
            <person name="Entian K.-D."/>
            <person name="Eraso P."/>
            <person name="Escribano V."/>
            <person name="Fabiani L."/>
            <person name="Fartmann B."/>
            <person name="Feroli F."/>
            <person name="Feuermann M."/>
            <person name="Frontali L."/>
            <person name="Garcia-Gonzalez M."/>
            <person name="Garcia-Saez M.I."/>
            <person name="Goffeau A."/>
            <person name="Guerreiro P."/>
            <person name="Hani J."/>
            <person name="Hansen M."/>
            <person name="Hebling U."/>
            <person name="Hernandez K."/>
            <person name="Heumann K."/>
            <person name="Hilger F."/>
            <person name="Hofmann B."/>
            <person name="Indge K.J."/>
            <person name="James C.M."/>
            <person name="Klima R."/>
            <person name="Koetter P."/>
            <person name="Kramer B."/>
            <person name="Kramer W."/>
            <person name="Lauquin G."/>
            <person name="Leuther H."/>
            <person name="Louis E.J."/>
            <person name="Maillier E."/>
            <person name="Marconi A."/>
            <person name="Martegani E."/>
            <person name="Mazon M.J."/>
            <person name="Mazzoni C."/>
            <person name="McReynolds A.D.K."/>
            <person name="Melchioretto P."/>
            <person name="Mewes H.-W."/>
            <person name="Minenkova O."/>
            <person name="Mueller-Auer S."/>
            <person name="Nawrocki A."/>
            <person name="Netter P."/>
            <person name="Neu R."/>
            <person name="Nombela C."/>
            <person name="Oliver S.G."/>
            <person name="Panzeri L."/>
            <person name="Paoluzi S."/>
            <person name="Plevani P."/>
            <person name="Portetelle D."/>
            <person name="Portillo F."/>
            <person name="Potier S."/>
            <person name="Purnelle B."/>
            <person name="Rieger M."/>
            <person name="Riles L."/>
            <person name="Rinaldi T."/>
            <person name="Robben J."/>
            <person name="Rodrigues-Pousada C."/>
            <person name="Rodriguez-Belmonte E."/>
            <person name="Rodriguez-Torres A.M."/>
            <person name="Rose M."/>
            <person name="Ruzzi M."/>
            <person name="Saliola M."/>
            <person name="Sanchez-Perez M."/>
            <person name="Schaefer B."/>
            <person name="Schaefer M."/>
            <person name="Scharfe M."/>
            <person name="Schmidheini T."/>
            <person name="Schreer A."/>
            <person name="Skala J."/>
            <person name="Souciet J.-L."/>
            <person name="Steensma H.Y."/>
            <person name="Talla E."/>
            <person name="Thierry A."/>
            <person name="Vandenbol M."/>
            <person name="van der Aart Q.J.M."/>
            <person name="Van Dyck L."/>
            <person name="Vanoni M."/>
            <person name="Verhasselt P."/>
            <person name="Voet M."/>
            <person name="Volckaert G."/>
            <person name="Wambutt R."/>
            <person name="Watson M.D."/>
            <person name="Weber N."/>
            <person name="Wedler E."/>
            <person name="Wedler H."/>
            <person name="Wipfli P."/>
            <person name="Wolf K."/>
            <person name="Wright L.F."/>
            <person name="Zaccaria P."/>
            <person name="Zimmermann M."/>
            <person name="Zollner A."/>
            <person name="Kleine K."/>
        </authorList>
    </citation>
    <scope>NUCLEOTIDE SEQUENCE [LARGE SCALE GENOMIC DNA]</scope>
    <source>
        <strain>ATCC 204508 / S288c</strain>
    </source>
</reference>
<reference key="3">
    <citation type="journal article" date="2014" name="G3 (Bethesda)">
        <title>The reference genome sequence of Saccharomyces cerevisiae: Then and now.</title>
        <authorList>
            <person name="Engel S.R."/>
            <person name="Dietrich F.S."/>
            <person name="Fisk D.G."/>
            <person name="Binkley G."/>
            <person name="Balakrishnan R."/>
            <person name="Costanzo M.C."/>
            <person name="Dwight S.S."/>
            <person name="Hitz B.C."/>
            <person name="Karra K."/>
            <person name="Nash R.S."/>
            <person name="Weng S."/>
            <person name="Wong E.D."/>
            <person name="Lloyd P."/>
            <person name="Skrzypek M.S."/>
            <person name="Miyasato S.R."/>
            <person name="Simison M."/>
            <person name="Cherry J.M."/>
        </authorList>
    </citation>
    <scope>GENOME REANNOTATION</scope>
    <source>
        <strain>ATCC 204508 / S288c</strain>
    </source>
</reference>
<reference key="4">
    <citation type="journal article" date="2007" name="Genome Res.">
        <title>Approaching a complete repository of sequence-verified protein-encoding clones for Saccharomyces cerevisiae.</title>
        <authorList>
            <person name="Hu Y."/>
            <person name="Rolfs A."/>
            <person name="Bhullar B."/>
            <person name="Murthy T.V.S."/>
            <person name="Zhu C."/>
            <person name="Berger M.F."/>
            <person name="Camargo A.A."/>
            <person name="Kelley F."/>
            <person name="McCarron S."/>
            <person name="Jepson D."/>
            <person name="Richardson A."/>
            <person name="Raphael J."/>
            <person name="Moreira D."/>
            <person name="Taycher E."/>
            <person name="Zuo D."/>
            <person name="Mohr S."/>
            <person name="Kane M.F."/>
            <person name="Williamson J."/>
            <person name="Simpson A.J.G."/>
            <person name="Bulyk M.L."/>
            <person name="Harlow E."/>
            <person name="Marsischky G."/>
            <person name="Kolodner R.D."/>
            <person name="LaBaer J."/>
        </authorList>
    </citation>
    <scope>NUCLEOTIDE SEQUENCE [GENOMIC DNA]</scope>
    <source>
        <strain>ATCC 204508 / S288c</strain>
    </source>
</reference>
<reference key="5">
    <citation type="journal article" date="2001" name="Biochemistry">
        <title>Yeast mitochondrial dehydrogenases are associated in a supramolecular complex.</title>
        <authorList>
            <person name="Grandier-Vazeille X."/>
            <person name="Bathany K."/>
            <person name="Chaignepain S."/>
            <person name="Camougrand N."/>
            <person name="Manon S."/>
            <person name="Schmitter J.-M."/>
        </authorList>
    </citation>
    <scope>SUBCELLULAR LOCATION</scope>
</reference>
<reference key="6">
    <citation type="journal article" date="2003" name="Nature">
        <title>Global analysis of protein expression in yeast.</title>
        <authorList>
            <person name="Ghaemmaghami S."/>
            <person name="Huh W.-K."/>
            <person name="Bower K."/>
            <person name="Howson R.W."/>
            <person name="Belle A."/>
            <person name="Dephoure N."/>
            <person name="O'Shea E.K."/>
            <person name="Weissman J.S."/>
        </authorList>
    </citation>
    <scope>LEVEL OF PROTEIN EXPRESSION [LARGE SCALE ANALYSIS]</scope>
</reference>
<protein>
    <recommendedName>
        <fullName>Nonsense-mediated mRNA decay protein 3</fullName>
    </recommendedName>
    <alternativeName>
        <fullName>Up-frameshift suppressor 3</fullName>
    </alternativeName>
</protein>
<dbReference type="EMBL" id="L41153">
    <property type="protein sequence ID" value="AAC41671.1"/>
    <property type="molecule type" value="Genomic_DNA"/>
</dbReference>
<dbReference type="EMBL" id="Z72857">
    <property type="protein sequence ID" value="CAA97074.1"/>
    <property type="molecule type" value="Genomic_DNA"/>
</dbReference>
<dbReference type="EMBL" id="AY692750">
    <property type="protein sequence ID" value="AAT92769.1"/>
    <property type="molecule type" value="Genomic_DNA"/>
</dbReference>
<dbReference type="EMBL" id="BK006941">
    <property type="protein sequence ID" value="DAA08166.1"/>
    <property type="molecule type" value="Genomic_DNA"/>
</dbReference>
<dbReference type="PIR" id="S62140">
    <property type="entry name" value="S62140"/>
</dbReference>
<dbReference type="RefSeq" id="NP_011586.1">
    <property type="nucleotide sequence ID" value="NM_001181201.1"/>
</dbReference>
<dbReference type="BioGRID" id="33315">
    <property type="interactions" value="283"/>
</dbReference>
<dbReference type="ComplexPortal" id="CPX-1315">
    <property type="entry name" value="Nonsense-mediated decay complex"/>
</dbReference>
<dbReference type="DIP" id="DIP-2294N"/>
<dbReference type="FunCoup" id="P48412">
    <property type="interactions" value="148"/>
</dbReference>
<dbReference type="IntAct" id="P48412">
    <property type="interactions" value="8"/>
</dbReference>
<dbReference type="MINT" id="P48412"/>
<dbReference type="STRING" id="4932.YGR072W"/>
<dbReference type="iPTMnet" id="P48412"/>
<dbReference type="PaxDb" id="4932-YGR072W"/>
<dbReference type="PeptideAtlas" id="P48412"/>
<dbReference type="EnsemblFungi" id="YGR072W_mRNA">
    <property type="protein sequence ID" value="YGR072W"/>
    <property type="gene ID" value="YGR072W"/>
</dbReference>
<dbReference type="GeneID" id="852963"/>
<dbReference type="KEGG" id="sce:YGR072W"/>
<dbReference type="AGR" id="SGD:S000003304"/>
<dbReference type="SGD" id="S000003304">
    <property type="gene designation" value="UPF3"/>
</dbReference>
<dbReference type="VEuPathDB" id="FungiDB:YGR072W"/>
<dbReference type="eggNOG" id="KOG1295">
    <property type="taxonomic scope" value="Eukaryota"/>
</dbReference>
<dbReference type="HOGENOM" id="CLU_059786_0_0_1"/>
<dbReference type="InParanoid" id="P48412"/>
<dbReference type="OMA" id="LEKCANF"/>
<dbReference type="OrthoDB" id="18087at2759"/>
<dbReference type="BioCyc" id="YEAST:G3O-30785-MONOMER"/>
<dbReference type="Reactome" id="R-SCE-159236">
    <property type="pathway name" value="Transport of Mature mRNA derived from an Intron-Containing Transcript"/>
</dbReference>
<dbReference type="Reactome" id="R-SCE-975957">
    <property type="pathway name" value="Nonsense Mediated Decay (NMD) enhanced by the Exon Junction Complex (EJC)"/>
</dbReference>
<dbReference type="BioGRID-ORCS" id="852963">
    <property type="hits" value="0 hits in 10 CRISPR screens"/>
</dbReference>
<dbReference type="CD-CODE" id="A777E0F8">
    <property type="entry name" value="P-body"/>
</dbReference>
<dbReference type="PRO" id="PR:P48412"/>
<dbReference type="Proteomes" id="UP000002311">
    <property type="component" value="Chromosome VII"/>
</dbReference>
<dbReference type="RNAct" id="P48412">
    <property type="molecule type" value="protein"/>
</dbReference>
<dbReference type="GO" id="GO:0005737">
    <property type="term" value="C:cytoplasm"/>
    <property type="evidence" value="ECO:0000314"/>
    <property type="project" value="SGD"/>
</dbReference>
<dbReference type="GO" id="GO:0005730">
    <property type="term" value="C:nucleolus"/>
    <property type="evidence" value="ECO:0000314"/>
    <property type="project" value="SGD"/>
</dbReference>
<dbReference type="GO" id="GO:0005634">
    <property type="term" value="C:nucleus"/>
    <property type="evidence" value="ECO:0000314"/>
    <property type="project" value="SGD"/>
</dbReference>
<dbReference type="GO" id="GO:0003729">
    <property type="term" value="F:mRNA binding"/>
    <property type="evidence" value="ECO:0007005"/>
    <property type="project" value="SGD"/>
</dbReference>
<dbReference type="GO" id="GO:0071026">
    <property type="term" value="P:cytoplasmic RNA surveillance"/>
    <property type="evidence" value="ECO:0000303"/>
    <property type="project" value="ComplexPortal"/>
</dbReference>
<dbReference type="GO" id="GO:0006310">
    <property type="term" value="P:DNA recombination"/>
    <property type="evidence" value="ECO:0000315"/>
    <property type="project" value="SGD"/>
</dbReference>
<dbReference type="GO" id="GO:0070478">
    <property type="term" value="P:nuclear-transcribed mRNA catabolic process, 3'-5' exonucleolytic nonsense-mediated decay"/>
    <property type="evidence" value="ECO:0000316"/>
    <property type="project" value="SGD"/>
</dbReference>
<dbReference type="GO" id="GO:0000184">
    <property type="term" value="P:nuclear-transcribed mRNA catabolic process, nonsense-mediated decay"/>
    <property type="evidence" value="ECO:0000318"/>
    <property type="project" value="GO_Central"/>
</dbReference>
<dbReference type="GO" id="GO:0045727">
    <property type="term" value="P:positive regulation of translation"/>
    <property type="evidence" value="ECO:0000318"/>
    <property type="project" value="GO_Central"/>
</dbReference>
<dbReference type="GO" id="GO:0016567">
    <property type="term" value="P:protein ubiquitination"/>
    <property type="evidence" value="ECO:0000315"/>
    <property type="project" value="SGD"/>
</dbReference>
<dbReference type="CDD" id="cd12455">
    <property type="entry name" value="RRM_like_Smg4_UPF3"/>
    <property type="match status" value="1"/>
</dbReference>
<dbReference type="FunFam" id="3.30.70.330:FF:000963">
    <property type="entry name" value="NMD pathway component"/>
    <property type="match status" value="1"/>
</dbReference>
<dbReference type="Gene3D" id="3.30.70.330">
    <property type="match status" value="1"/>
</dbReference>
<dbReference type="InterPro" id="IPR012677">
    <property type="entry name" value="Nucleotide-bd_a/b_plait_sf"/>
</dbReference>
<dbReference type="InterPro" id="IPR035979">
    <property type="entry name" value="RBD_domain_sf"/>
</dbReference>
<dbReference type="InterPro" id="IPR039722">
    <property type="entry name" value="Upf3"/>
</dbReference>
<dbReference type="InterPro" id="IPR005120">
    <property type="entry name" value="UPF3_dom"/>
</dbReference>
<dbReference type="PANTHER" id="PTHR13112:SF0">
    <property type="entry name" value="FI21285P1"/>
    <property type="match status" value="1"/>
</dbReference>
<dbReference type="PANTHER" id="PTHR13112">
    <property type="entry name" value="UPF3 REGULATOR OF NONSENSE TRANSCRIPTS-LIKE PROTEIN"/>
    <property type="match status" value="1"/>
</dbReference>
<dbReference type="Pfam" id="PF03467">
    <property type="entry name" value="Smg4_UPF3"/>
    <property type="match status" value="1"/>
</dbReference>
<dbReference type="SUPFAM" id="SSF54928">
    <property type="entry name" value="RNA-binding domain, RBD"/>
    <property type="match status" value="1"/>
</dbReference>
<gene>
    <name type="primary">UPF3</name>
    <name type="synonym">SUA6</name>
    <name type="ordered locus">YGR072W</name>
</gene>
<accession>P48412</accession>
<accession>D6VUK5</accession>
<accession>E9P8W8</accession>
<organism>
    <name type="scientific">Saccharomyces cerevisiae (strain ATCC 204508 / S288c)</name>
    <name type="common">Baker's yeast</name>
    <dbReference type="NCBI Taxonomy" id="559292"/>
    <lineage>
        <taxon>Eukaryota</taxon>
        <taxon>Fungi</taxon>
        <taxon>Dikarya</taxon>
        <taxon>Ascomycota</taxon>
        <taxon>Saccharomycotina</taxon>
        <taxon>Saccharomycetes</taxon>
        <taxon>Saccharomycetales</taxon>
        <taxon>Saccharomycetaceae</taxon>
        <taxon>Saccharomyces</taxon>
    </lineage>
</organism>
<comment type="function">
    <text>Involved in nonsense-mediated decay of mRNAs containing premature stop codons.</text>
</comment>
<comment type="interaction">
    <interactant intactId="EBI-20117">
        <id>P48412</id>
    </interactant>
    <interactant intactId="EBI-12071">
        <id>P38798</id>
        <label>NMD2</label>
    </interactant>
    <organismsDiffer>false</organismsDiffer>
    <experiments>4</experiments>
</comment>
<comment type="subcellular location">
    <subcellularLocation>
        <location evidence="3">Nucleus</location>
    </subcellularLocation>
</comment>
<comment type="miscellaneous">
    <text evidence="4">Present with 1250 molecules/cell in log phase SD medium.</text>
</comment>
<comment type="similarity">
    <text evidence="5">Belongs to the RENT3 family.</text>
</comment>
<proteinExistence type="evidence at protein level"/>
<feature type="chain" id="PRO_0000215298" description="Nonsense-mediated mRNA decay protein 3">
    <location>
        <begin position="1"/>
        <end position="387"/>
    </location>
</feature>
<feature type="region of interest" description="Disordered" evidence="2">
    <location>
        <begin position="1"/>
        <end position="71"/>
    </location>
</feature>
<feature type="region of interest" description="Disordered" evidence="2">
    <location>
        <begin position="270"/>
        <end position="317"/>
    </location>
</feature>
<feature type="region of interest" description="Disordered" evidence="2">
    <location>
        <begin position="345"/>
        <end position="387"/>
    </location>
</feature>
<feature type="short sequence motif" description="Nuclear localization signal" evidence="1">
    <location>
        <begin position="15"/>
        <end position="31"/>
    </location>
</feature>
<feature type="short sequence motif" description="Nuclear localization signal" evidence="1">
    <location>
        <begin position="58"/>
        <end position="75"/>
    </location>
</feature>
<feature type="short sequence motif" description="Nuclear localization signal" evidence="1">
    <location>
        <begin position="284"/>
        <end position="300"/>
    </location>
</feature>
<feature type="compositionally biased region" description="Basic residues" evidence="2">
    <location>
        <begin position="15"/>
        <end position="29"/>
    </location>
</feature>
<feature type="compositionally biased region" description="Basic and acidic residues" evidence="2">
    <location>
        <begin position="30"/>
        <end position="42"/>
    </location>
</feature>
<feature type="compositionally biased region" description="Polar residues" evidence="2">
    <location>
        <begin position="43"/>
        <end position="52"/>
    </location>
</feature>
<feature type="compositionally biased region" description="Basic residues" evidence="2">
    <location>
        <begin position="55"/>
        <end position="71"/>
    </location>
</feature>
<feature type="compositionally biased region" description="Basic residues" evidence="2">
    <location>
        <begin position="272"/>
        <end position="285"/>
    </location>
</feature>
<feature type="compositionally biased region" description="Basic residues" evidence="2">
    <location>
        <begin position="295"/>
        <end position="307"/>
    </location>
</feature>
<feature type="compositionally biased region" description="Low complexity" evidence="2">
    <location>
        <begin position="350"/>
        <end position="368"/>
    </location>
</feature>
<feature type="sequence conflict" description="In Ref. 4; AAT92769." evidence="5" ref="4">
    <original>N</original>
    <variation>D</variation>
    <location>
        <position position="26"/>
    </location>
</feature>